<feature type="chain" id="PRO_0000047651" description="Zinc finger protein 561">
    <location>
        <begin position="1"/>
        <end position="486"/>
    </location>
</feature>
<feature type="domain" description="KRAB" evidence="3">
    <location>
        <begin position="41"/>
        <end position="127"/>
    </location>
</feature>
<feature type="zinc finger region" description="C2H2-type 1" evidence="2">
    <location>
        <begin position="118"/>
        <end position="140"/>
    </location>
</feature>
<feature type="zinc finger region" description="C2H2-type 2; degenerate" evidence="2">
    <location>
        <begin position="169"/>
        <end position="191"/>
    </location>
</feature>
<feature type="zinc finger region" description="C2H2-type 3" evidence="2">
    <location>
        <begin position="197"/>
        <end position="219"/>
    </location>
</feature>
<feature type="zinc finger region" description="C2H2-type 4; atypical" evidence="2">
    <location>
        <begin position="223"/>
        <end position="247"/>
    </location>
</feature>
<feature type="zinc finger region" description="C2H2-type 5; degenerate" evidence="2">
    <location>
        <begin position="253"/>
        <end position="275"/>
    </location>
</feature>
<feature type="zinc finger region" description="C2H2-type 6" evidence="2">
    <location>
        <begin position="281"/>
        <end position="303"/>
    </location>
</feature>
<feature type="zinc finger region" description="C2H2-type 7" evidence="2">
    <location>
        <begin position="309"/>
        <end position="331"/>
    </location>
</feature>
<feature type="zinc finger region" description="C2H2-type 8" evidence="2">
    <location>
        <begin position="337"/>
        <end position="359"/>
    </location>
</feature>
<feature type="zinc finger region" description="C2H2-type 9" evidence="2">
    <location>
        <begin position="365"/>
        <end position="387"/>
    </location>
</feature>
<feature type="zinc finger region" description="C2H2-type 10" evidence="2">
    <location>
        <begin position="393"/>
        <end position="415"/>
    </location>
</feature>
<feature type="zinc finger region" description="C2H2-type 11" evidence="2">
    <location>
        <begin position="421"/>
        <end position="443"/>
    </location>
</feature>
<feature type="zinc finger region" description="C2H2-type 12" evidence="2">
    <location>
        <begin position="449"/>
        <end position="471"/>
    </location>
</feature>
<feature type="cross-link" description="Glycyl lysine isopeptide (Lys-Gly) (interchain with G-Cter in SUMO2)" evidence="1">
    <location>
        <position position="273"/>
    </location>
</feature>
<feature type="cross-link" description="Glycyl lysine isopeptide (Lys-Gly) (interchain with G-Cter in SUMO2)" evidence="1">
    <location>
        <position position="424"/>
    </location>
</feature>
<dbReference type="EMBL" id="AB168576">
    <property type="protein sequence ID" value="BAE00690.1"/>
    <property type="molecule type" value="mRNA"/>
</dbReference>
<dbReference type="RefSeq" id="NP_001274562.1">
    <property type="nucleotide sequence ID" value="NM_001287633.1"/>
</dbReference>
<dbReference type="RefSeq" id="XP_015295644.1">
    <property type="nucleotide sequence ID" value="XM_015440158.1"/>
</dbReference>
<dbReference type="RefSeq" id="XP_015295646.1">
    <property type="nucleotide sequence ID" value="XM_015440160.1"/>
</dbReference>
<dbReference type="SMR" id="Q4R882"/>
<dbReference type="Ensembl" id="ENSMFAT00000067434.2">
    <property type="protein sequence ID" value="ENSMFAP00000016896.1"/>
    <property type="gene ID" value="ENSMFAG00000031616.2"/>
</dbReference>
<dbReference type="GeneID" id="102125186"/>
<dbReference type="KEGG" id="mcf:102125186"/>
<dbReference type="VEuPathDB" id="HostDB:ENSMFAG00000031616"/>
<dbReference type="eggNOG" id="KOG1721">
    <property type="taxonomic scope" value="Eukaryota"/>
</dbReference>
<dbReference type="GeneTree" id="ENSGT00940000162984"/>
<dbReference type="Proteomes" id="UP000233100">
    <property type="component" value="Chromosome 19"/>
</dbReference>
<dbReference type="Bgee" id="ENSMFAG00000031616">
    <property type="expression patterns" value="Expressed in pituitary gland and 13 other cell types or tissues"/>
</dbReference>
<dbReference type="GO" id="GO:0005634">
    <property type="term" value="C:nucleus"/>
    <property type="evidence" value="ECO:0007669"/>
    <property type="project" value="UniProtKB-SubCell"/>
</dbReference>
<dbReference type="GO" id="GO:0008270">
    <property type="term" value="F:zinc ion binding"/>
    <property type="evidence" value="ECO:0007669"/>
    <property type="project" value="UniProtKB-KW"/>
</dbReference>
<dbReference type="GO" id="GO:0006355">
    <property type="term" value="P:regulation of DNA-templated transcription"/>
    <property type="evidence" value="ECO:0007669"/>
    <property type="project" value="InterPro"/>
</dbReference>
<dbReference type="CDD" id="cd07765">
    <property type="entry name" value="KRAB_A-box"/>
    <property type="match status" value="1"/>
</dbReference>
<dbReference type="FunFam" id="3.30.160.60:FF:000352">
    <property type="entry name" value="zinc finger protein 3 homolog"/>
    <property type="match status" value="1"/>
</dbReference>
<dbReference type="FunFam" id="3.30.160.60:FF:000184">
    <property type="entry name" value="Zinc finger protein 333"/>
    <property type="match status" value="1"/>
</dbReference>
<dbReference type="FunFam" id="3.30.160.60:FF:000338">
    <property type="entry name" value="zinc finger protein 383"/>
    <property type="match status" value="1"/>
</dbReference>
<dbReference type="FunFam" id="3.30.160.60:FF:001945">
    <property type="entry name" value="Zinc finger protein 559"/>
    <property type="match status" value="1"/>
</dbReference>
<dbReference type="FunFam" id="3.30.160.60:FF:003432">
    <property type="entry name" value="Zinc finger protein 561"/>
    <property type="match status" value="1"/>
</dbReference>
<dbReference type="FunFam" id="3.30.160.60:FF:001116">
    <property type="entry name" value="Zinc finger protein 562"/>
    <property type="match status" value="2"/>
</dbReference>
<dbReference type="FunFam" id="3.30.160.60:FF:001157">
    <property type="entry name" value="Zinc finger protein 793"/>
    <property type="match status" value="1"/>
</dbReference>
<dbReference type="Gene3D" id="6.10.140.140">
    <property type="match status" value="1"/>
</dbReference>
<dbReference type="Gene3D" id="3.30.160.60">
    <property type="entry name" value="Classic Zinc Finger"/>
    <property type="match status" value="9"/>
</dbReference>
<dbReference type="InterPro" id="IPR001909">
    <property type="entry name" value="KRAB"/>
</dbReference>
<dbReference type="InterPro" id="IPR036051">
    <property type="entry name" value="KRAB_dom_sf"/>
</dbReference>
<dbReference type="InterPro" id="IPR050331">
    <property type="entry name" value="Zinc_finger"/>
</dbReference>
<dbReference type="InterPro" id="IPR036236">
    <property type="entry name" value="Znf_C2H2_sf"/>
</dbReference>
<dbReference type="InterPro" id="IPR013087">
    <property type="entry name" value="Znf_C2H2_type"/>
</dbReference>
<dbReference type="PANTHER" id="PTHR16515">
    <property type="entry name" value="PR DOMAIN ZINC FINGER PROTEIN"/>
    <property type="match status" value="1"/>
</dbReference>
<dbReference type="PANTHER" id="PTHR16515:SF51">
    <property type="entry name" value="ZINC FINGER PROTEIN 833-RELATED"/>
    <property type="match status" value="1"/>
</dbReference>
<dbReference type="Pfam" id="PF01352">
    <property type="entry name" value="KRAB"/>
    <property type="match status" value="1"/>
</dbReference>
<dbReference type="Pfam" id="PF00096">
    <property type="entry name" value="zf-C2H2"/>
    <property type="match status" value="9"/>
</dbReference>
<dbReference type="SMART" id="SM00349">
    <property type="entry name" value="KRAB"/>
    <property type="match status" value="1"/>
</dbReference>
<dbReference type="SMART" id="SM00355">
    <property type="entry name" value="ZnF_C2H2"/>
    <property type="match status" value="9"/>
</dbReference>
<dbReference type="SUPFAM" id="SSF57667">
    <property type="entry name" value="beta-beta-alpha zinc fingers"/>
    <property type="match status" value="7"/>
</dbReference>
<dbReference type="SUPFAM" id="SSF109640">
    <property type="entry name" value="KRAB domain (Kruppel-associated box)"/>
    <property type="match status" value="1"/>
</dbReference>
<dbReference type="PROSITE" id="PS50805">
    <property type="entry name" value="KRAB"/>
    <property type="match status" value="1"/>
</dbReference>
<dbReference type="PROSITE" id="PS00028">
    <property type="entry name" value="ZINC_FINGER_C2H2_1"/>
    <property type="match status" value="9"/>
</dbReference>
<dbReference type="PROSITE" id="PS50157">
    <property type="entry name" value="ZINC_FINGER_C2H2_2"/>
    <property type="match status" value="10"/>
</dbReference>
<organism>
    <name type="scientific">Macaca fascicularis</name>
    <name type="common">Crab-eating macaque</name>
    <name type="synonym">Cynomolgus monkey</name>
    <dbReference type="NCBI Taxonomy" id="9541"/>
    <lineage>
        <taxon>Eukaryota</taxon>
        <taxon>Metazoa</taxon>
        <taxon>Chordata</taxon>
        <taxon>Craniata</taxon>
        <taxon>Vertebrata</taxon>
        <taxon>Euteleostomi</taxon>
        <taxon>Mammalia</taxon>
        <taxon>Eutheria</taxon>
        <taxon>Euarchontoglires</taxon>
        <taxon>Primates</taxon>
        <taxon>Haplorrhini</taxon>
        <taxon>Catarrhini</taxon>
        <taxon>Cercopithecidae</taxon>
        <taxon>Cercopithecinae</taxon>
        <taxon>Macaca</taxon>
    </lineage>
</organism>
<evidence type="ECO:0000250" key="1">
    <source>
        <dbReference type="UniProtKB" id="Q8N587"/>
    </source>
</evidence>
<evidence type="ECO:0000255" key="2">
    <source>
        <dbReference type="PROSITE-ProRule" id="PRU00042"/>
    </source>
</evidence>
<evidence type="ECO:0000255" key="3">
    <source>
        <dbReference type="PROSITE-ProRule" id="PRU00119"/>
    </source>
</evidence>
<evidence type="ECO:0000305" key="4"/>
<protein>
    <recommendedName>
        <fullName>Zinc finger protein 561</fullName>
    </recommendedName>
</protein>
<name>ZN561_MACFA</name>
<reference key="1">
    <citation type="submission" date="2005-06" db="EMBL/GenBank/DDBJ databases">
        <title>DNA sequences of macaque genes expressed in brain or testis and its evolutionary implications.</title>
        <authorList>
            <consortium name="International consortium for macaque cDNA sequencing and analysis"/>
        </authorList>
    </citation>
    <scope>NUCLEOTIDE SEQUENCE [LARGE SCALE MRNA]</scope>
    <source>
        <tissue>Testis</tissue>
    </source>
</reference>
<gene>
    <name type="primary">ZNF561</name>
    <name type="ORF">QtsA-13144</name>
</gene>
<accession>Q4R882</accession>
<sequence length="486" mass="55253">MATIDLSHGFFSREPVCPFEEKTKAERMVEDYLANSYQDSVTFDDVAVDFTPEEWALLDTTEKYLYRDVMLENYMNLASVEWEIQPRIKRSSFQQGFLKNQIFSGIQMTRGYSGWKLCDCKNCGEVFSEQFCLKTHMRAHNGGNTSEGNCYGKDVLSVHKEASIGQELSKFNPCGKVFTLTPGLAVHLEVLNARQPYKCKECGKGFKYFASLDNHMGIHTDEKLCEFQECERAITPSSHLKQCVAVHTGKKSKKTKKYGKSFTNFSQLYAHVKTHKGEKSFECKECGRSFRNSSCLNDHIQIHTGIKPHKCTYCGKAFTRSTQLTEHVRTHTGIKPYECKECGQAFAQYSGLSIHIRSHSGKKPYQCKECGKAFTTSTSLIQHIRIHTGEKPYECVECGKTFITSSRRSKHLKTHSGEKPFVCKICGKAFLYSSRLNVHLRTHTGEKPFVCKECGKAFAVSSRLSRHERIHTGEKPHECKSMSVTI</sequence>
<proteinExistence type="evidence at transcript level"/>
<comment type="function">
    <text>May be involved in transcriptional regulation.</text>
</comment>
<comment type="subcellular location">
    <subcellularLocation>
        <location evidence="4">Nucleus</location>
    </subcellularLocation>
</comment>
<comment type="similarity">
    <text evidence="4">Belongs to the krueppel C2H2-type zinc-finger protein family.</text>
</comment>
<keyword id="KW-1017">Isopeptide bond</keyword>
<keyword id="KW-0479">Metal-binding</keyword>
<keyword id="KW-0539">Nucleus</keyword>
<keyword id="KW-1185">Reference proteome</keyword>
<keyword id="KW-0677">Repeat</keyword>
<keyword id="KW-0804">Transcription</keyword>
<keyword id="KW-0805">Transcription regulation</keyword>
<keyword id="KW-0832">Ubl conjugation</keyword>
<keyword id="KW-0862">Zinc</keyword>
<keyword id="KW-0863">Zinc-finger</keyword>